<sequence length="152" mass="17816">MKCPKCGSLNDKVVDTRQSKDGTVIRRRRECLDCGYRFTTYERFEEEKIVVKKKNGTTEPFNKDKIIRGIRLASKNRPVSEKQMVEIADEIEKYLLEEGKLVVESTEIGDLVQEKLKKIDPVSYLRFKSVYNEFQDIKDFEKALKEIEEKGE</sequence>
<keyword id="KW-0067">ATP-binding</keyword>
<keyword id="KW-0238">DNA-binding</keyword>
<keyword id="KW-0479">Metal-binding</keyword>
<keyword id="KW-0547">Nucleotide-binding</keyword>
<keyword id="KW-1185">Reference proteome</keyword>
<keyword id="KW-0678">Repressor</keyword>
<keyword id="KW-0804">Transcription</keyword>
<keyword id="KW-0805">Transcription regulation</keyword>
<keyword id="KW-0862">Zinc</keyword>
<keyword id="KW-0863">Zinc-finger</keyword>
<accession>C0QQA0</accession>
<dbReference type="EMBL" id="CP001230">
    <property type="protein sequence ID" value="ACO04691.1"/>
    <property type="molecule type" value="Genomic_DNA"/>
</dbReference>
<dbReference type="RefSeq" id="WP_012676928.1">
    <property type="nucleotide sequence ID" value="NC_012440.1"/>
</dbReference>
<dbReference type="SMR" id="C0QQA0"/>
<dbReference type="STRING" id="123214.PERMA_1060"/>
<dbReference type="PaxDb" id="123214-PERMA_1060"/>
<dbReference type="KEGG" id="pmx:PERMA_1060"/>
<dbReference type="eggNOG" id="COG1327">
    <property type="taxonomic scope" value="Bacteria"/>
</dbReference>
<dbReference type="HOGENOM" id="CLU_108412_0_0_0"/>
<dbReference type="OrthoDB" id="9807461at2"/>
<dbReference type="Proteomes" id="UP000001366">
    <property type="component" value="Chromosome"/>
</dbReference>
<dbReference type="GO" id="GO:0005524">
    <property type="term" value="F:ATP binding"/>
    <property type="evidence" value="ECO:0007669"/>
    <property type="project" value="UniProtKB-KW"/>
</dbReference>
<dbReference type="GO" id="GO:0003677">
    <property type="term" value="F:DNA binding"/>
    <property type="evidence" value="ECO:0007669"/>
    <property type="project" value="UniProtKB-KW"/>
</dbReference>
<dbReference type="GO" id="GO:0008270">
    <property type="term" value="F:zinc ion binding"/>
    <property type="evidence" value="ECO:0007669"/>
    <property type="project" value="UniProtKB-UniRule"/>
</dbReference>
<dbReference type="GO" id="GO:0045892">
    <property type="term" value="P:negative regulation of DNA-templated transcription"/>
    <property type="evidence" value="ECO:0007669"/>
    <property type="project" value="UniProtKB-UniRule"/>
</dbReference>
<dbReference type="HAMAP" id="MF_00440">
    <property type="entry name" value="NrdR"/>
    <property type="match status" value="1"/>
</dbReference>
<dbReference type="InterPro" id="IPR005144">
    <property type="entry name" value="ATP-cone_dom"/>
</dbReference>
<dbReference type="InterPro" id="IPR055173">
    <property type="entry name" value="NrdR-like_N"/>
</dbReference>
<dbReference type="InterPro" id="IPR003796">
    <property type="entry name" value="RNR_NrdR-like"/>
</dbReference>
<dbReference type="NCBIfam" id="TIGR00244">
    <property type="entry name" value="transcriptional regulator NrdR"/>
    <property type="match status" value="1"/>
</dbReference>
<dbReference type="PANTHER" id="PTHR30455">
    <property type="entry name" value="TRANSCRIPTIONAL REPRESSOR NRDR"/>
    <property type="match status" value="1"/>
</dbReference>
<dbReference type="PANTHER" id="PTHR30455:SF2">
    <property type="entry name" value="TRANSCRIPTIONAL REPRESSOR NRDR"/>
    <property type="match status" value="1"/>
</dbReference>
<dbReference type="Pfam" id="PF03477">
    <property type="entry name" value="ATP-cone"/>
    <property type="match status" value="1"/>
</dbReference>
<dbReference type="Pfam" id="PF22811">
    <property type="entry name" value="Zn_ribbon_NrdR"/>
    <property type="match status" value="1"/>
</dbReference>
<dbReference type="PROSITE" id="PS51161">
    <property type="entry name" value="ATP_CONE"/>
    <property type="match status" value="1"/>
</dbReference>
<reference key="1">
    <citation type="journal article" date="2009" name="J. Bacteriol.">
        <title>Complete and draft genome sequences of six members of the Aquificales.</title>
        <authorList>
            <person name="Reysenbach A.-L."/>
            <person name="Hamamura N."/>
            <person name="Podar M."/>
            <person name="Griffiths E."/>
            <person name="Ferreira S."/>
            <person name="Hochstein R."/>
            <person name="Heidelberg J."/>
            <person name="Johnson J."/>
            <person name="Mead D."/>
            <person name="Pohorille A."/>
            <person name="Sarmiento M."/>
            <person name="Schweighofer K."/>
            <person name="Seshadri R."/>
            <person name="Voytek M.A."/>
        </authorList>
    </citation>
    <scope>NUCLEOTIDE SEQUENCE [LARGE SCALE GENOMIC DNA]</scope>
    <source>
        <strain>DSM 14350 / EX-H1</strain>
    </source>
</reference>
<comment type="function">
    <text evidence="1">Negatively regulates transcription of bacterial ribonucleotide reductase nrd genes and operons by binding to NrdR-boxes.</text>
</comment>
<comment type="cofactor">
    <cofactor evidence="1">
        <name>Zn(2+)</name>
        <dbReference type="ChEBI" id="CHEBI:29105"/>
    </cofactor>
    <text evidence="1">Binds 1 zinc ion.</text>
</comment>
<comment type="similarity">
    <text evidence="1">Belongs to the NrdR family.</text>
</comment>
<gene>
    <name evidence="1" type="primary">nrdR</name>
    <name type="ordered locus">PERMA_1060</name>
</gene>
<feature type="chain" id="PRO_1000191808" description="Transcriptional repressor NrdR">
    <location>
        <begin position="1"/>
        <end position="152"/>
    </location>
</feature>
<feature type="domain" description="ATP-cone" evidence="1">
    <location>
        <begin position="49"/>
        <end position="139"/>
    </location>
</feature>
<feature type="zinc finger region" evidence="1">
    <location>
        <begin position="3"/>
        <end position="34"/>
    </location>
</feature>
<name>NRDR_PERMH</name>
<protein>
    <recommendedName>
        <fullName evidence="1">Transcriptional repressor NrdR</fullName>
    </recommendedName>
</protein>
<evidence type="ECO:0000255" key="1">
    <source>
        <dbReference type="HAMAP-Rule" id="MF_00440"/>
    </source>
</evidence>
<organism>
    <name type="scientific">Persephonella marina (strain DSM 14350 / EX-H1)</name>
    <dbReference type="NCBI Taxonomy" id="123214"/>
    <lineage>
        <taxon>Bacteria</taxon>
        <taxon>Pseudomonadati</taxon>
        <taxon>Aquificota</taxon>
        <taxon>Aquificia</taxon>
        <taxon>Aquificales</taxon>
        <taxon>Hydrogenothermaceae</taxon>
        <taxon>Persephonella</taxon>
    </lineage>
</organism>
<proteinExistence type="inferred from homology"/>